<evidence type="ECO:0000250" key="1"/>
<evidence type="ECO:0000305" key="2"/>
<comment type="function">
    <text evidence="1">This protein is one of the two subunits of integration host factor, a specific DNA-binding protein that functions in genetic recombination as well as in transcriptional and translational control.</text>
</comment>
<comment type="subunit">
    <text evidence="1">Heterodimer of an alpha and a beta chain.</text>
</comment>
<comment type="similarity">
    <text evidence="2">Belongs to the bacterial histone-like protein family.</text>
</comment>
<gene>
    <name type="primary">ihfA</name>
    <name type="synonym">himA</name>
    <name type="ordered locus">XF_0743</name>
</gene>
<organism>
    <name type="scientific">Xylella fastidiosa (strain 9a5c)</name>
    <dbReference type="NCBI Taxonomy" id="160492"/>
    <lineage>
        <taxon>Bacteria</taxon>
        <taxon>Pseudomonadati</taxon>
        <taxon>Pseudomonadota</taxon>
        <taxon>Gammaproteobacteria</taxon>
        <taxon>Lysobacterales</taxon>
        <taxon>Lysobacteraceae</taxon>
        <taxon>Xylella</taxon>
    </lineage>
</organism>
<name>IHFA_XYLFA</name>
<sequence length="99" mass="11364">MALTKAEMVERLFDEVGLNKREAKEFVDTFFDLLRDALEQGRQIKLSGFGNFELRCKNQRPGRNPKTGEEIPISARTVVTFRSGQKLKERVDAYVGSRQ</sequence>
<dbReference type="EMBL" id="AE003849">
    <property type="protein sequence ID" value="AAF83553.1"/>
    <property type="molecule type" value="Genomic_DNA"/>
</dbReference>
<dbReference type="PIR" id="D82767">
    <property type="entry name" value="D82767"/>
</dbReference>
<dbReference type="RefSeq" id="WP_010893266.1">
    <property type="nucleotide sequence ID" value="NC_002488.3"/>
</dbReference>
<dbReference type="SMR" id="Q9PFD5"/>
<dbReference type="STRING" id="160492.XF_0743"/>
<dbReference type="KEGG" id="xfa:XF_0743"/>
<dbReference type="eggNOG" id="COG0776">
    <property type="taxonomic scope" value="Bacteria"/>
</dbReference>
<dbReference type="HOGENOM" id="CLU_105066_1_3_6"/>
<dbReference type="Proteomes" id="UP000000812">
    <property type="component" value="Chromosome"/>
</dbReference>
<dbReference type="GO" id="GO:0005829">
    <property type="term" value="C:cytosol"/>
    <property type="evidence" value="ECO:0007669"/>
    <property type="project" value="TreeGrafter"/>
</dbReference>
<dbReference type="GO" id="GO:0003677">
    <property type="term" value="F:DNA binding"/>
    <property type="evidence" value="ECO:0007669"/>
    <property type="project" value="UniProtKB-UniRule"/>
</dbReference>
<dbReference type="GO" id="GO:0030527">
    <property type="term" value="F:structural constituent of chromatin"/>
    <property type="evidence" value="ECO:0007669"/>
    <property type="project" value="InterPro"/>
</dbReference>
<dbReference type="GO" id="GO:0006310">
    <property type="term" value="P:DNA recombination"/>
    <property type="evidence" value="ECO:0007669"/>
    <property type="project" value="UniProtKB-UniRule"/>
</dbReference>
<dbReference type="GO" id="GO:0009893">
    <property type="term" value="P:positive regulation of metabolic process"/>
    <property type="evidence" value="ECO:0007669"/>
    <property type="project" value="UniProtKB-ARBA"/>
</dbReference>
<dbReference type="GO" id="GO:0006355">
    <property type="term" value="P:regulation of DNA-templated transcription"/>
    <property type="evidence" value="ECO:0007669"/>
    <property type="project" value="UniProtKB-UniRule"/>
</dbReference>
<dbReference type="GO" id="GO:0006417">
    <property type="term" value="P:regulation of translation"/>
    <property type="evidence" value="ECO:0007669"/>
    <property type="project" value="UniProtKB-UniRule"/>
</dbReference>
<dbReference type="CDD" id="cd13835">
    <property type="entry name" value="IHF_A"/>
    <property type="match status" value="1"/>
</dbReference>
<dbReference type="FunFam" id="4.10.520.10:FF:000002">
    <property type="entry name" value="Integration host factor subunit alpha"/>
    <property type="match status" value="1"/>
</dbReference>
<dbReference type="Gene3D" id="4.10.520.10">
    <property type="entry name" value="IHF-like DNA-binding proteins"/>
    <property type="match status" value="1"/>
</dbReference>
<dbReference type="HAMAP" id="MF_00380">
    <property type="entry name" value="IHF_alpha"/>
    <property type="match status" value="1"/>
</dbReference>
<dbReference type="InterPro" id="IPR000119">
    <property type="entry name" value="Hist_DNA-bd"/>
</dbReference>
<dbReference type="InterPro" id="IPR020816">
    <property type="entry name" value="Histone-like_DNA-bd_CS"/>
</dbReference>
<dbReference type="InterPro" id="IPR010992">
    <property type="entry name" value="IHF-like_DNA-bd_dom_sf"/>
</dbReference>
<dbReference type="InterPro" id="IPR005684">
    <property type="entry name" value="IHF_alpha"/>
</dbReference>
<dbReference type="NCBIfam" id="TIGR00987">
    <property type="entry name" value="himA"/>
    <property type="match status" value="1"/>
</dbReference>
<dbReference type="NCBIfam" id="NF001401">
    <property type="entry name" value="PRK00285.1"/>
    <property type="match status" value="1"/>
</dbReference>
<dbReference type="PANTHER" id="PTHR33175">
    <property type="entry name" value="DNA-BINDING PROTEIN HU"/>
    <property type="match status" value="1"/>
</dbReference>
<dbReference type="PANTHER" id="PTHR33175:SF2">
    <property type="entry name" value="INTEGRATION HOST FACTOR SUBUNIT ALPHA"/>
    <property type="match status" value="1"/>
</dbReference>
<dbReference type="Pfam" id="PF00216">
    <property type="entry name" value="Bac_DNA_binding"/>
    <property type="match status" value="1"/>
</dbReference>
<dbReference type="PRINTS" id="PR01727">
    <property type="entry name" value="DNABINDINGHU"/>
</dbReference>
<dbReference type="SMART" id="SM00411">
    <property type="entry name" value="BHL"/>
    <property type="match status" value="1"/>
</dbReference>
<dbReference type="SUPFAM" id="SSF47729">
    <property type="entry name" value="IHF-like DNA-binding proteins"/>
    <property type="match status" value="1"/>
</dbReference>
<dbReference type="PROSITE" id="PS00045">
    <property type="entry name" value="HISTONE_LIKE"/>
    <property type="match status" value="1"/>
</dbReference>
<accession>Q9PFD5</accession>
<reference key="1">
    <citation type="journal article" date="2000" name="Nature">
        <title>The genome sequence of the plant pathogen Xylella fastidiosa.</title>
        <authorList>
            <person name="Simpson A.J.G."/>
            <person name="Reinach F.C."/>
            <person name="Arruda P."/>
            <person name="Abreu F.A."/>
            <person name="Acencio M."/>
            <person name="Alvarenga R."/>
            <person name="Alves L.M.C."/>
            <person name="Araya J.E."/>
            <person name="Baia G.S."/>
            <person name="Baptista C.S."/>
            <person name="Barros M.H."/>
            <person name="Bonaccorsi E.D."/>
            <person name="Bordin S."/>
            <person name="Bove J.M."/>
            <person name="Briones M.R.S."/>
            <person name="Bueno M.R.P."/>
            <person name="Camargo A.A."/>
            <person name="Camargo L.E.A."/>
            <person name="Carraro D.M."/>
            <person name="Carrer H."/>
            <person name="Colauto N.B."/>
            <person name="Colombo C."/>
            <person name="Costa F.F."/>
            <person name="Costa M.C.R."/>
            <person name="Costa-Neto C.M."/>
            <person name="Coutinho L.L."/>
            <person name="Cristofani M."/>
            <person name="Dias-Neto E."/>
            <person name="Docena C."/>
            <person name="El-Dorry H."/>
            <person name="Facincani A.P."/>
            <person name="Ferreira A.J.S."/>
            <person name="Ferreira V.C.A."/>
            <person name="Ferro J.A."/>
            <person name="Fraga J.S."/>
            <person name="Franca S.C."/>
            <person name="Franco M.C."/>
            <person name="Frohme M."/>
            <person name="Furlan L.R."/>
            <person name="Garnier M."/>
            <person name="Goldman G.H."/>
            <person name="Goldman M.H.S."/>
            <person name="Gomes S.L."/>
            <person name="Gruber A."/>
            <person name="Ho P.L."/>
            <person name="Hoheisel J.D."/>
            <person name="Junqueira M.L."/>
            <person name="Kemper E.L."/>
            <person name="Kitajima J.P."/>
            <person name="Krieger J.E."/>
            <person name="Kuramae E.E."/>
            <person name="Laigret F."/>
            <person name="Lambais M.R."/>
            <person name="Leite L.C.C."/>
            <person name="Lemos E.G.M."/>
            <person name="Lemos M.V.F."/>
            <person name="Lopes S.A."/>
            <person name="Lopes C.R."/>
            <person name="Machado J.A."/>
            <person name="Machado M.A."/>
            <person name="Madeira A.M.B.N."/>
            <person name="Madeira H.M.F."/>
            <person name="Marino C.L."/>
            <person name="Marques M.V."/>
            <person name="Martins E.A.L."/>
            <person name="Martins E.M.F."/>
            <person name="Matsukuma A.Y."/>
            <person name="Menck C.F.M."/>
            <person name="Miracca E.C."/>
            <person name="Miyaki C.Y."/>
            <person name="Monteiro-Vitorello C.B."/>
            <person name="Moon D.H."/>
            <person name="Nagai M.A."/>
            <person name="Nascimento A.L.T.O."/>
            <person name="Netto L.E.S."/>
            <person name="Nhani A. Jr."/>
            <person name="Nobrega F.G."/>
            <person name="Nunes L.R."/>
            <person name="Oliveira M.A."/>
            <person name="de Oliveira M.C."/>
            <person name="de Oliveira R.C."/>
            <person name="Palmieri D.A."/>
            <person name="Paris A."/>
            <person name="Peixoto B.R."/>
            <person name="Pereira G.A.G."/>
            <person name="Pereira H.A. Jr."/>
            <person name="Pesquero J.B."/>
            <person name="Quaggio R.B."/>
            <person name="Roberto P.G."/>
            <person name="Rodrigues V."/>
            <person name="de Rosa A.J.M."/>
            <person name="de Rosa V.E. Jr."/>
            <person name="de Sa R.G."/>
            <person name="Santelli R.V."/>
            <person name="Sawasaki H.E."/>
            <person name="da Silva A.C.R."/>
            <person name="da Silva A.M."/>
            <person name="da Silva F.R."/>
            <person name="Silva W.A. Jr."/>
            <person name="da Silveira J.F."/>
            <person name="Silvestri M.L.Z."/>
            <person name="Siqueira W.J."/>
            <person name="de Souza A.A."/>
            <person name="de Souza A.P."/>
            <person name="Terenzi M.F."/>
            <person name="Truffi D."/>
            <person name="Tsai S.M."/>
            <person name="Tsuhako M.H."/>
            <person name="Vallada H."/>
            <person name="Van Sluys M.A."/>
            <person name="Verjovski-Almeida S."/>
            <person name="Vettore A.L."/>
            <person name="Zago M.A."/>
            <person name="Zatz M."/>
            <person name="Meidanis J."/>
            <person name="Setubal J.C."/>
        </authorList>
    </citation>
    <scope>NUCLEOTIDE SEQUENCE [LARGE SCALE GENOMIC DNA]</scope>
    <source>
        <strain>9a5c</strain>
    </source>
</reference>
<protein>
    <recommendedName>
        <fullName>Integration host factor subunit alpha</fullName>
        <shortName>IHF-alpha</shortName>
    </recommendedName>
</protein>
<keyword id="KW-0233">DNA recombination</keyword>
<keyword id="KW-0238">DNA-binding</keyword>
<keyword id="KW-0804">Transcription</keyword>
<keyword id="KW-0805">Transcription regulation</keyword>
<keyword id="KW-0810">Translation regulation</keyword>
<feature type="chain" id="PRO_0000105035" description="Integration host factor subunit alpha">
    <location>
        <begin position="1"/>
        <end position="99"/>
    </location>
</feature>
<proteinExistence type="inferred from homology"/>